<proteinExistence type="inferred from homology"/>
<dbReference type="EC" id="3.5.4.2" evidence="1"/>
<dbReference type="EMBL" id="CP000680">
    <property type="protein sequence ID" value="ABP86454.1"/>
    <property type="molecule type" value="Genomic_DNA"/>
</dbReference>
<dbReference type="SMR" id="A4XYN8"/>
<dbReference type="STRING" id="399739.Pmen_3706"/>
<dbReference type="KEGG" id="pmy:Pmen_3706"/>
<dbReference type="PATRIC" id="fig|399739.8.peg.3757"/>
<dbReference type="eggNOG" id="COG1816">
    <property type="taxonomic scope" value="Bacteria"/>
</dbReference>
<dbReference type="HOGENOM" id="CLU_039228_7_0_6"/>
<dbReference type="OrthoDB" id="105475at2"/>
<dbReference type="GO" id="GO:0005829">
    <property type="term" value="C:cytosol"/>
    <property type="evidence" value="ECO:0007669"/>
    <property type="project" value="TreeGrafter"/>
</dbReference>
<dbReference type="GO" id="GO:0000034">
    <property type="term" value="F:adenine deaminase activity"/>
    <property type="evidence" value="ECO:0007669"/>
    <property type="project" value="UniProtKB-UniRule"/>
</dbReference>
<dbReference type="GO" id="GO:0008270">
    <property type="term" value="F:zinc ion binding"/>
    <property type="evidence" value="ECO:0007669"/>
    <property type="project" value="UniProtKB-UniRule"/>
</dbReference>
<dbReference type="GO" id="GO:0006146">
    <property type="term" value="P:adenine catabolic process"/>
    <property type="evidence" value="ECO:0007669"/>
    <property type="project" value="UniProtKB-UniRule"/>
</dbReference>
<dbReference type="GO" id="GO:0043103">
    <property type="term" value="P:hypoxanthine salvage"/>
    <property type="evidence" value="ECO:0007669"/>
    <property type="project" value="UniProtKB-UniRule"/>
</dbReference>
<dbReference type="GO" id="GO:0009117">
    <property type="term" value="P:nucleotide metabolic process"/>
    <property type="evidence" value="ECO:0007669"/>
    <property type="project" value="UniProtKB-KW"/>
</dbReference>
<dbReference type="CDD" id="cd01320">
    <property type="entry name" value="ADA"/>
    <property type="match status" value="1"/>
</dbReference>
<dbReference type="FunFam" id="3.20.20.140:FF:000039">
    <property type="entry name" value="Adenine deaminase"/>
    <property type="match status" value="1"/>
</dbReference>
<dbReference type="Gene3D" id="3.20.20.140">
    <property type="entry name" value="Metal-dependent hydrolases"/>
    <property type="match status" value="1"/>
</dbReference>
<dbReference type="HAMAP" id="MF_01962">
    <property type="entry name" value="Adenine_deaminase"/>
    <property type="match status" value="1"/>
</dbReference>
<dbReference type="InterPro" id="IPR001365">
    <property type="entry name" value="A_deaminase_dom"/>
</dbReference>
<dbReference type="InterPro" id="IPR028892">
    <property type="entry name" value="ADE"/>
</dbReference>
<dbReference type="InterPro" id="IPR006330">
    <property type="entry name" value="Ado/ade_deaminase"/>
</dbReference>
<dbReference type="InterPro" id="IPR032466">
    <property type="entry name" value="Metal_Hydrolase"/>
</dbReference>
<dbReference type="NCBIfam" id="TIGR01430">
    <property type="entry name" value="aden_deam"/>
    <property type="match status" value="1"/>
</dbReference>
<dbReference type="NCBIfam" id="NF006850">
    <property type="entry name" value="PRK09358.1-6"/>
    <property type="match status" value="1"/>
</dbReference>
<dbReference type="PANTHER" id="PTHR43114">
    <property type="entry name" value="ADENINE DEAMINASE"/>
    <property type="match status" value="1"/>
</dbReference>
<dbReference type="PANTHER" id="PTHR43114:SF6">
    <property type="entry name" value="ADENINE DEAMINASE"/>
    <property type="match status" value="1"/>
</dbReference>
<dbReference type="Pfam" id="PF00962">
    <property type="entry name" value="A_deaminase"/>
    <property type="match status" value="1"/>
</dbReference>
<dbReference type="SUPFAM" id="SSF51556">
    <property type="entry name" value="Metallo-dependent hydrolases"/>
    <property type="match status" value="1"/>
</dbReference>
<protein>
    <recommendedName>
        <fullName evidence="1">Adenine deaminase</fullName>
        <shortName evidence="1">ADE</shortName>
        <ecNumber evidence="1">3.5.4.2</ecNumber>
    </recommendedName>
    <alternativeName>
        <fullName evidence="1">Adenine aminohydrolase</fullName>
        <shortName evidence="1">AAH</shortName>
    </alternativeName>
</protein>
<organism>
    <name type="scientific">Ectopseudomonas mendocina (strain ymp)</name>
    <name type="common">Pseudomonas mendocina</name>
    <dbReference type="NCBI Taxonomy" id="399739"/>
    <lineage>
        <taxon>Bacteria</taxon>
        <taxon>Pseudomonadati</taxon>
        <taxon>Pseudomonadota</taxon>
        <taxon>Gammaproteobacteria</taxon>
        <taxon>Pseudomonadales</taxon>
        <taxon>Pseudomonadaceae</taxon>
        <taxon>Ectopseudomonas</taxon>
    </lineage>
</organism>
<name>ADE_ECTM1</name>
<reference key="1">
    <citation type="submission" date="2007-04" db="EMBL/GenBank/DDBJ databases">
        <title>Complete sequence of Pseudomonas mendocina ymp.</title>
        <authorList>
            <consortium name="US DOE Joint Genome Institute"/>
            <person name="Copeland A."/>
            <person name="Lucas S."/>
            <person name="Lapidus A."/>
            <person name="Barry K."/>
            <person name="Glavina del Rio T."/>
            <person name="Dalin E."/>
            <person name="Tice H."/>
            <person name="Pitluck S."/>
            <person name="Kiss H."/>
            <person name="Brettin T."/>
            <person name="Detter J.C."/>
            <person name="Bruce D."/>
            <person name="Han C."/>
            <person name="Schmutz J."/>
            <person name="Larimer F."/>
            <person name="Land M."/>
            <person name="Hauser L."/>
            <person name="Kyrpides N."/>
            <person name="Mikhailova N."/>
            <person name="Hersman L."/>
            <person name="Dubois J."/>
            <person name="Maurice P."/>
            <person name="Richardson P."/>
        </authorList>
    </citation>
    <scope>NUCLEOTIDE SEQUENCE [LARGE SCALE GENOMIC DNA]</scope>
    <source>
        <strain>ymp</strain>
    </source>
</reference>
<comment type="function">
    <text evidence="1">Catalyzes the hydrolytic deamination of adenine to hypoxanthine. Plays an important role in the purine salvage pathway and in nitrogen catabolism.</text>
</comment>
<comment type="catalytic activity">
    <reaction evidence="1">
        <text>adenine + H2O + H(+) = hypoxanthine + NH4(+)</text>
        <dbReference type="Rhea" id="RHEA:23688"/>
        <dbReference type="ChEBI" id="CHEBI:15377"/>
        <dbReference type="ChEBI" id="CHEBI:15378"/>
        <dbReference type="ChEBI" id="CHEBI:16708"/>
        <dbReference type="ChEBI" id="CHEBI:17368"/>
        <dbReference type="ChEBI" id="CHEBI:28938"/>
        <dbReference type="EC" id="3.5.4.2"/>
    </reaction>
</comment>
<comment type="cofactor">
    <cofactor evidence="1">
        <name>Zn(2+)</name>
        <dbReference type="ChEBI" id="CHEBI:29105"/>
    </cofactor>
    <text evidence="1">Binds 1 zinc ion per subunit.</text>
</comment>
<comment type="similarity">
    <text evidence="1">Belongs to the metallo-dependent hydrolases superfamily. Adenosine and AMP deaminases family. Adenine deaminase type 2 subfamily.</text>
</comment>
<accession>A4XYN8</accession>
<keyword id="KW-0378">Hydrolase</keyword>
<keyword id="KW-0479">Metal-binding</keyword>
<keyword id="KW-0546">Nucleotide metabolism</keyword>
<keyword id="KW-0862">Zinc</keyword>
<feature type="chain" id="PRO_1000017682" description="Adenine deaminase">
    <location>
        <begin position="1"/>
        <end position="315"/>
    </location>
</feature>
<feature type="active site" description="Proton donor" evidence="1">
    <location>
        <position position="197"/>
    </location>
</feature>
<feature type="binding site" evidence="1">
    <location>
        <position position="14"/>
    </location>
    <ligand>
        <name>Zn(2+)</name>
        <dbReference type="ChEBI" id="CHEBI:29105"/>
        <note>catalytic</note>
    </ligand>
</feature>
<feature type="binding site" evidence="1">
    <location>
        <position position="16"/>
    </location>
    <ligand>
        <name>Zn(2+)</name>
        <dbReference type="ChEBI" id="CHEBI:29105"/>
        <note>catalytic</note>
    </ligand>
</feature>
<feature type="binding site" evidence="1">
    <location>
        <position position="194"/>
    </location>
    <ligand>
        <name>Zn(2+)</name>
        <dbReference type="ChEBI" id="CHEBI:29105"/>
        <note>catalytic</note>
    </ligand>
</feature>
<feature type="binding site" evidence="1">
    <location>
        <position position="275"/>
    </location>
    <ligand>
        <name>Zn(2+)</name>
        <dbReference type="ChEBI" id="CHEBI:29105"/>
        <note>catalytic</note>
    </ligand>
</feature>
<feature type="binding site" evidence="1">
    <location>
        <position position="276"/>
    </location>
    <ligand>
        <name>substrate</name>
    </ligand>
</feature>
<feature type="site" description="Important for catalytic activity" evidence="1">
    <location>
        <position position="218"/>
    </location>
</feature>
<sequence>MYDWLNALPKAELHLHLEGSLEPELLFALAERNKIELPWADVETLRAAYAFNNLQEFLDLYYQGANVLRSEQDFYDLTWAYLQRCKAQNVVHVEPFFDPQTHTDRGIPFEVVLRGIRQALLDGEKQLGISHGLILSFLRHLPEEEAFKTLEQAMPFRDAFIGVGLDSSEKGFPPRLFERVFAKARSEGLHAVAHAGEEGPPEYIWEALDLLKVERIDHGVRAIEDERLMQRIIDEQIPLTVCPLSNIKLCVFEHMGQHNILDMLERGVKVTVNSDDPAYFGGYVGENFAALHEHLGMSEEQARRLAQNSLDARLA</sequence>
<gene>
    <name type="ordered locus">Pmen_3706</name>
</gene>
<evidence type="ECO:0000255" key="1">
    <source>
        <dbReference type="HAMAP-Rule" id="MF_01962"/>
    </source>
</evidence>